<protein>
    <recommendedName>
        <fullName evidence="1">SsrA-binding protein</fullName>
    </recommendedName>
    <alternativeName>
        <fullName evidence="1">Small protein B</fullName>
    </alternativeName>
</protein>
<organism>
    <name type="scientific">Mesorhizobium japonicum (strain LMG 29417 / CECT 9101 / MAFF 303099)</name>
    <name type="common">Mesorhizobium loti (strain MAFF 303099)</name>
    <dbReference type="NCBI Taxonomy" id="266835"/>
    <lineage>
        <taxon>Bacteria</taxon>
        <taxon>Pseudomonadati</taxon>
        <taxon>Pseudomonadota</taxon>
        <taxon>Alphaproteobacteria</taxon>
        <taxon>Hyphomicrobiales</taxon>
        <taxon>Phyllobacteriaceae</taxon>
        <taxon>Mesorhizobium</taxon>
    </lineage>
</organism>
<keyword id="KW-0963">Cytoplasm</keyword>
<keyword id="KW-0694">RNA-binding</keyword>
<proteinExistence type="inferred from homology"/>
<feature type="chain" id="PRO_0000103012" description="SsrA-binding protein">
    <location>
        <begin position="1"/>
        <end position="159"/>
    </location>
</feature>
<feature type="region of interest" description="Disordered" evidence="2">
    <location>
        <begin position="137"/>
        <end position="159"/>
    </location>
</feature>
<accession>Q985B9</accession>
<comment type="function">
    <text evidence="1">Required for rescue of stalled ribosomes mediated by trans-translation. Binds to transfer-messenger RNA (tmRNA), required for stable association of tmRNA with ribosomes. tmRNA and SmpB together mimic tRNA shape, replacing the anticodon stem-loop with SmpB. tmRNA is encoded by the ssrA gene; the 2 termini fold to resemble tRNA(Ala) and it encodes a 'tag peptide', a short internal open reading frame. During trans-translation Ala-aminoacylated tmRNA acts like a tRNA, entering the A-site of stalled ribosomes, displacing the stalled mRNA. The ribosome then switches to translate the ORF on the tmRNA; the nascent peptide is terminated with the 'tag peptide' encoded by the tmRNA and targeted for degradation. The ribosome is freed to recommence translation, which seems to be the essential function of trans-translation.</text>
</comment>
<comment type="subcellular location">
    <subcellularLocation>
        <location evidence="1">Cytoplasm</location>
    </subcellularLocation>
    <text evidence="1">The tmRNA-SmpB complex associates with stalled 70S ribosomes.</text>
</comment>
<comment type="similarity">
    <text evidence="1">Belongs to the SmpB family.</text>
</comment>
<name>SSRP_RHILO</name>
<dbReference type="EMBL" id="BA000012">
    <property type="protein sequence ID" value="BAB54144.1"/>
    <property type="molecule type" value="Genomic_DNA"/>
</dbReference>
<dbReference type="RefSeq" id="WP_006202221.1">
    <property type="nucleotide sequence ID" value="NC_002678.2"/>
</dbReference>
<dbReference type="SMR" id="Q985B9"/>
<dbReference type="GeneID" id="90992199"/>
<dbReference type="KEGG" id="mlo:mlr7747"/>
<dbReference type="eggNOG" id="COG0691">
    <property type="taxonomic scope" value="Bacteria"/>
</dbReference>
<dbReference type="HOGENOM" id="CLU_108953_0_1_5"/>
<dbReference type="Proteomes" id="UP000000552">
    <property type="component" value="Chromosome"/>
</dbReference>
<dbReference type="GO" id="GO:0005829">
    <property type="term" value="C:cytosol"/>
    <property type="evidence" value="ECO:0007669"/>
    <property type="project" value="TreeGrafter"/>
</dbReference>
<dbReference type="GO" id="GO:0003723">
    <property type="term" value="F:RNA binding"/>
    <property type="evidence" value="ECO:0007669"/>
    <property type="project" value="UniProtKB-UniRule"/>
</dbReference>
<dbReference type="GO" id="GO:0070929">
    <property type="term" value="P:trans-translation"/>
    <property type="evidence" value="ECO:0007669"/>
    <property type="project" value="UniProtKB-UniRule"/>
</dbReference>
<dbReference type="CDD" id="cd09294">
    <property type="entry name" value="SmpB"/>
    <property type="match status" value="1"/>
</dbReference>
<dbReference type="Gene3D" id="2.40.280.10">
    <property type="match status" value="1"/>
</dbReference>
<dbReference type="HAMAP" id="MF_00023">
    <property type="entry name" value="SmpB"/>
    <property type="match status" value="1"/>
</dbReference>
<dbReference type="InterPro" id="IPR023620">
    <property type="entry name" value="SmpB"/>
</dbReference>
<dbReference type="InterPro" id="IPR000037">
    <property type="entry name" value="SsrA-bd_prot"/>
</dbReference>
<dbReference type="InterPro" id="IPR020081">
    <property type="entry name" value="SsrA-bd_prot_CS"/>
</dbReference>
<dbReference type="NCBIfam" id="NF003843">
    <property type="entry name" value="PRK05422.1"/>
    <property type="match status" value="1"/>
</dbReference>
<dbReference type="NCBIfam" id="TIGR00086">
    <property type="entry name" value="smpB"/>
    <property type="match status" value="1"/>
</dbReference>
<dbReference type="PANTHER" id="PTHR30308:SF2">
    <property type="entry name" value="SSRA-BINDING PROTEIN"/>
    <property type="match status" value="1"/>
</dbReference>
<dbReference type="PANTHER" id="PTHR30308">
    <property type="entry name" value="TMRNA-BINDING COMPONENT OF TRANS-TRANSLATION TAGGING COMPLEX"/>
    <property type="match status" value="1"/>
</dbReference>
<dbReference type="Pfam" id="PF01668">
    <property type="entry name" value="SmpB"/>
    <property type="match status" value="1"/>
</dbReference>
<dbReference type="SUPFAM" id="SSF74982">
    <property type="entry name" value="Small protein B (SmpB)"/>
    <property type="match status" value="1"/>
</dbReference>
<dbReference type="PROSITE" id="PS01317">
    <property type="entry name" value="SSRP"/>
    <property type="match status" value="1"/>
</dbReference>
<sequence length="159" mass="18467">MNQVRKADPNNKTVAENRKARFSYEVLDTIEAGLVLTGTEVKSLRQGQANIQDSYASVEGGEIWLINSYLPEYLQANRFNHEPRRRRKLLLNKREMAKLSQSVDREGMTLVPLKIYFNDQGRAKLLLAVGRGKKLHDKRETEKQRDWSREKGRLLKERG</sequence>
<evidence type="ECO:0000255" key="1">
    <source>
        <dbReference type="HAMAP-Rule" id="MF_00023"/>
    </source>
</evidence>
<evidence type="ECO:0000256" key="2">
    <source>
        <dbReference type="SAM" id="MobiDB-lite"/>
    </source>
</evidence>
<reference key="1">
    <citation type="journal article" date="2000" name="DNA Res.">
        <title>Complete genome structure of the nitrogen-fixing symbiotic bacterium Mesorhizobium loti.</title>
        <authorList>
            <person name="Kaneko T."/>
            <person name="Nakamura Y."/>
            <person name="Sato S."/>
            <person name="Asamizu E."/>
            <person name="Kato T."/>
            <person name="Sasamoto S."/>
            <person name="Watanabe A."/>
            <person name="Idesawa K."/>
            <person name="Ishikawa A."/>
            <person name="Kawashima K."/>
            <person name="Kimura T."/>
            <person name="Kishida Y."/>
            <person name="Kiyokawa C."/>
            <person name="Kohara M."/>
            <person name="Matsumoto M."/>
            <person name="Matsuno A."/>
            <person name="Mochizuki Y."/>
            <person name="Nakayama S."/>
            <person name="Nakazaki N."/>
            <person name="Shimpo S."/>
            <person name="Sugimoto M."/>
            <person name="Takeuchi C."/>
            <person name="Yamada M."/>
            <person name="Tabata S."/>
        </authorList>
    </citation>
    <scope>NUCLEOTIDE SEQUENCE [LARGE SCALE GENOMIC DNA]</scope>
    <source>
        <strain>LMG 29417 / CECT 9101 / MAFF 303099</strain>
    </source>
</reference>
<gene>
    <name evidence="1" type="primary">smpB</name>
    <name type="ordered locus">mlr7747</name>
</gene>